<dbReference type="EC" id="4.1.2.13"/>
<dbReference type="EMBL" id="BX571857">
    <property type="protein sequence ID" value="CAG43836.1"/>
    <property type="molecule type" value="Genomic_DNA"/>
</dbReference>
<dbReference type="SMR" id="Q6G7I5"/>
<dbReference type="KEGG" id="sas:SAS2028"/>
<dbReference type="HOGENOM" id="CLU_040088_0_1_9"/>
<dbReference type="UniPathway" id="UPA00109">
    <property type="reaction ID" value="UER00183"/>
</dbReference>
<dbReference type="GO" id="GO:0004332">
    <property type="term" value="F:fructose-bisphosphate aldolase activity"/>
    <property type="evidence" value="ECO:0007669"/>
    <property type="project" value="UniProtKB-EC"/>
</dbReference>
<dbReference type="GO" id="GO:0008270">
    <property type="term" value="F:zinc ion binding"/>
    <property type="evidence" value="ECO:0007669"/>
    <property type="project" value="InterPro"/>
</dbReference>
<dbReference type="GO" id="GO:0030388">
    <property type="term" value="P:fructose 1,6-bisphosphate metabolic process"/>
    <property type="evidence" value="ECO:0007669"/>
    <property type="project" value="InterPro"/>
</dbReference>
<dbReference type="GO" id="GO:0006096">
    <property type="term" value="P:glycolytic process"/>
    <property type="evidence" value="ECO:0007669"/>
    <property type="project" value="UniProtKB-UniPathway"/>
</dbReference>
<dbReference type="CDD" id="cd00947">
    <property type="entry name" value="TBP_aldolase_IIB"/>
    <property type="match status" value="1"/>
</dbReference>
<dbReference type="Gene3D" id="3.20.20.70">
    <property type="entry name" value="Aldolase class I"/>
    <property type="match status" value="1"/>
</dbReference>
<dbReference type="InterPro" id="IPR013785">
    <property type="entry name" value="Aldolase_TIM"/>
</dbReference>
<dbReference type="InterPro" id="IPR050246">
    <property type="entry name" value="Class_II_FBP_aldolase"/>
</dbReference>
<dbReference type="InterPro" id="IPR000771">
    <property type="entry name" value="FBA_II"/>
</dbReference>
<dbReference type="InterPro" id="IPR011289">
    <property type="entry name" value="Fruc_bis_ald_class-2"/>
</dbReference>
<dbReference type="NCBIfam" id="TIGR00167">
    <property type="entry name" value="cbbA"/>
    <property type="match status" value="1"/>
</dbReference>
<dbReference type="NCBIfam" id="TIGR01859">
    <property type="entry name" value="fruc_bis_ald"/>
    <property type="match status" value="1"/>
</dbReference>
<dbReference type="NCBIfam" id="NF006376">
    <property type="entry name" value="PRK08610.1"/>
    <property type="match status" value="1"/>
</dbReference>
<dbReference type="PANTHER" id="PTHR30304">
    <property type="entry name" value="D-TAGATOSE-1,6-BISPHOSPHATE ALDOLASE"/>
    <property type="match status" value="1"/>
</dbReference>
<dbReference type="PANTHER" id="PTHR30304:SF0">
    <property type="entry name" value="D-TAGATOSE-1,6-BISPHOSPHATE ALDOLASE SUBUNIT GATY-RELATED"/>
    <property type="match status" value="1"/>
</dbReference>
<dbReference type="Pfam" id="PF01116">
    <property type="entry name" value="F_bP_aldolase"/>
    <property type="match status" value="1"/>
</dbReference>
<dbReference type="PIRSF" id="PIRSF001359">
    <property type="entry name" value="F_bP_aldolase_II"/>
    <property type="match status" value="1"/>
</dbReference>
<dbReference type="SUPFAM" id="SSF51569">
    <property type="entry name" value="Aldolase"/>
    <property type="match status" value="1"/>
</dbReference>
<dbReference type="PROSITE" id="PS00806">
    <property type="entry name" value="ALDOLASE_CLASS_II_2"/>
    <property type="match status" value="1"/>
</dbReference>
<organism>
    <name type="scientific">Staphylococcus aureus (strain MSSA476)</name>
    <dbReference type="NCBI Taxonomy" id="282459"/>
    <lineage>
        <taxon>Bacteria</taxon>
        <taxon>Bacillati</taxon>
        <taxon>Bacillota</taxon>
        <taxon>Bacilli</taxon>
        <taxon>Bacillales</taxon>
        <taxon>Staphylococcaceae</taxon>
        <taxon>Staphylococcus</taxon>
    </lineage>
</organism>
<keyword id="KW-0324">Glycolysis</keyword>
<keyword id="KW-0456">Lyase</keyword>
<keyword id="KW-0479">Metal-binding</keyword>
<keyword id="KW-0862">Zinc</keyword>
<name>ALF2_STAAS</name>
<evidence type="ECO:0000250" key="1"/>
<evidence type="ECO:0000305" key="2"/>
<sequence>MPLVSMKEMLIDAKENGYAVGQYNINNLEFTQAILEASQEENAPVILGVSEGAARYMSGFYTIVKMVEGLMHDLNITIPVAIHLDHGSSFEKCKEAIDAGFTSVMIDASHSPFEENVATTKKVVEYAHEKGVSVEAELGTVGGQEDDVVADGIIYADPKECQELVEKTGIDALAPALGSVHGPYKGEPKLGFKEMEEIGLSTGLPLVLHGGTGIPTKDIQKAIPFGTAKINVNTENQIASAKAVRDVLNNDKEVYDPRKYLGPAREAIKETVKGKIKEFGTSNRAK</sequence>
<proteinExistence type="inferred from homology"/>
<gene>
    <name type="primary">fba</name>
    <name type="synonym">fbaA</name>
    <name type="ordered locus">SAS2028</name>
</gene>
<reference key="1">
    <citation type="journal article" date="2004" name="Proc. Natl. Acad. Sci. U.S.A.">
        <title>Complete genomes of two clinical Staphylococcus aureus strains: evidence for the rapid evolution of virulence and drug resistance.</title>
        <authorList>
            <person name="Holden M.T.G."/>
            <person name="Feil E.J."/>
            <person name="Lindsay J.A."/>
            <person name="Peacock S.J."/>
            <person name="Day N.P.J."/>
            <person name="Enright M.C."/>
            <person name="Foster T.J."/>
            <person name="Moore C.E."/>
            <person name="Hurst L."/>
            <person name="Atkin R."/>
            <person name="Barron A."/>
            <person name="Bason N."/>
            <person name="Bentley S.D."/>
            <person name="Chillingworth C."/>
            <person name="Chillingworth T."/>
            <person name="Churcher C."/>
            <person name="Clark L."/>
            <person name="Corton C."/>
            <person name="Cronin A."/>
            <person name="Doggett J."/>
            <person name="Dowd L."/>
            <person name="Feltwell T."/>
            <person name="Hance Z."/>
            <person name="Harris B."/>
            <person name="Hauser H."/>
            <person name="Holroyd S."/>
            <person name="Jagels K."/>
            <person name="James K.D."/>
            <person name="Lennard N."/>
            <person name="Line A."/>
            <person name="Mayes R."/>
            <person name="Moule S."/>
            <person name="Mungall K."/>
            <person name="Ormond D."/>
            <person name="Quail M.A."/>
            <person name="Rabbinowitsch E."/>
            <person name="Rutherford K.M."/>
            <person name="Sanders M."/>
            <person name="Sharp S."/>
            <person name="Simmonds M."/>
            <person name="Stevens K."/>
            <person name="Whitehead S."/>
            <person name="Barrell B.G."/>
            <person name="Spratt B.G."/>
            <person name="Parkhill J."/>
        </authorList>
    </citation>
    <scope>NUCLEOTIDE SEQUENCE [LARGE SCALE GENOMIC DNA]</scope>
    <source>
        <strain>MSSA476</strain>
    </source>
</reference>
<protein>
    <recommendedName>
        <fullName>Fructose-bisphosphate aldolase</fullName>
        <shortName>FBP aldolase</shortName>
        <shortName>FBPA</shortName>
        <ecNumber>4.1.2.13</ecNumber>
    </recommendedName>
    <alternativeName>
        <fullName>Fructose-1,6-bisphosphate aldolase</fullName>
    </alternativeName>
</protein>
<comment type="function">
    <text evidence="1">Catalyzes the aldol condensation of dihydroxyacetone phosphate (DHAP or glycerone-phosphate) with glyceraldehyde 3-phosphate (G3P) to form fructose 1,6-bisphosphate (FBP) in gluconeogenesis and the reverse reaction in glycolysis.</text>
</comment>
<comment type="catalytic activity">
    <reaction>
        <text>beta-D-fructose 1,6-bisphosphate = D-glyceraldehyde 3-phosphate + dihydroxyacetone phosphate</text>
        <dbReference type="Rhea" id="RHEA:14729"/>
        <dbReference type="ChEBI" id="CHEBI:32966"/>
        <dbReference type="ChEBI" id="CHEBI:57642"/>
        <dbReference type="ChEBI" id="CHEBI:59776"/>
        <dbReference type="EC" id="4.1.2.13"/>
    </reaction>
</comment>
<comment type="cofactor">
    <cofactor evidence="1">
        <name>Zn(2+)</name>
        <dbReference type="ChEBI" id="CHEBI:29105"/>
    </cofactor>
    <text evidence="1">Binds 2 Zn(2+) ions per subunit. One is catalytic and the other provides a structural contribution.</text>
</comment>
<comment type="pathway">
    <text>Carbohydrate degradation; glycolysis; D-glyceraldehyde 3-phosphate and glycerone phosphate from D-glucose: step 4/4.</text>
</comment>
<comment type="similarity">
    <text evidence="2">Belongs to the class II fructose-bisphosphate aldolase family.</text>
</comment>
<feature type="chain" id="PRO_0000178739" description="Fructose-bisphosphate aldolase">
    <location>
        <begin position="1"/>
        <end position="286"/>
    </location>
</feature>
<feature type="active site" description="Proton donor" evidence="1">
    <location>
        <position position="85"/>
    </location>
</feature>
<feature type="binding site" evidence="1">
    <location>
        <position position="50"/>
    </location>
    <ligand>
        <name>D-glyceraldehyde 3-phosphate</name>
        <dbReference type="ChEBI" id="CHEBI:59776"/>
    </ligand>
</feature>
<feature type="binding site" evidence="1">
    <location>
        <position position="86"/>
    </location>
    <ligand>
        <name>Zn(2+)</name>
        <dbReference type="ChEBI" id="CHEBI:29105"/>
        <label>1</label>
        <note>catalytic</note>
    </ligand>
</feature>
<feature type="binding site" evidence="1">
    <location>
        <position position="107"/>
    </location>
    <ligand>
        <name>Zn(2+)</name>
        <dbReference type="ChEBI" id="CHEBI:29105"/>
        <label>2</label>
    </ligand>
</feature>
<feature type="binding site" evidence="1">
    <location>
        <position position="137"/>
    </location>
    <ligand>
        <name>Zn(2+)</name>
        <dbReference type="ChEBI" id="CHEBI:29105"/>
        <label>2</label>
    </ligand>
</feature>
<feature type="binding site" evidence="1">
    <location>
        <position position="181"/>
    </location>
    <ligand>
        <name>Zn(2+)</name>
        <dbReference type="ChEBI" id="CHEBI:29105"/>
        <label>1</label>
        <note>catalytic</note>
    </ligand>
</feature>
<feature type="binding site" evidence="1">
    <location>
        <position position="182"/>
    </location>
    <ligand>
        <name>dihydroxyacetone phosphate</name>
        <dbReference type="ChEBI" id="CHEBI:57642"/>
    </ligand>
</feature>
<feature type="binding site" evidence="1">
    <location>
        <position position="209"/>
    </location>
    <ligand>
        <name>Zn(2+)</name>
        <dbReference type="ChEBI" id="CHEBI:29105"/>
        <label>1</label>
        <note>catalytic</note>
    </ligand>
</feature>
<feature type="binding site" evidence="1">
    <location>
        <begin position="210"/>
        <end position="212"/>
    </location>
    <ligand>
        <name>dihydroxyacetone phosphate</name>
        <dbReference type="ChEBI" id="CHEBI:57642"/>
    </ligand>
</feature>
<feature type="binding site" evidence="1">
    <location>
        <begin position="231"/>
        <end position="234"/>
    </location>
    <ligand>
        <name>dihydroxyacetone phosphate</name>
        <dbReference type="ChEBI" id="CHEBI:57642"/>
    </ligand>
</feature>
<accession>Q6G7I5</accession>